<organism>
    <name type="scientific">Stenotrophomonas maltophilia (strain K279a)</name>
    <dbReference type="NCBI Taxonomy" id="522373"/>
    <lineage>
        <taxon>Bacteria</taxon>
        <taxon>Pseudomonadati</taxon>
        <taxon>Pseudomonadota</taxon>
        <taxon>Gammaproteobacteria</taxon>
        <taxon>Lysobacterales</taxon>
        <taxon>Lysobacteraceae</taxon>
        <taxon>Stenotrophomonas</taxon>
        <taxon>Stenotrophomonas maltophilia group</taxon>
    </lineage>
</organism>
<name>SYM_STRMK</name>
<comment type="function">
    <text evidence="1">Is required not only for elongation of protein synthesis but also for the initiation of all mRNA translation through initiator tRNA(fMet) aminoacylation.</text>
</comment>
<comment type="catalytic activity">
    <reaction evidence="1">
        <text>tRNA(Met) + L-methionine + ATP = L-methionyl-tRNA(Met) + AMP + diphosphate</text>
        <dbReference type="Rhea" id="RHEA:13481"/>
        <dbReference type="Rhea" id="RHEA-COMP:9667"/>
        <dbReference type="Rhea" id="RHEA-COMP:9698"/>
        <dbReference type="ChEBI" id="CHEBI:30616"/>
        <dbReference type="ChEBI" id="CHEBI:33019"/>
        <dbReference type="ChEBI" id="CHEBI:57844"/>
        <dbReference type="ChEBI" id="CHEBI:78442"/>
        <dbReference type="ChEBI" id="CHEBI:78530"/>
        <dbReference type="ChEBI" id="CHEBI:456215"/>
        <dbReference type="EC" id="6.1.1.10"/>
    </reaction>
</comment>
<comment type="cofactor">
    <cofactor evidence="1">
        <name>Zn(2+)</name>
        <dbReference type="ChEBI" id="CHEBI:29105"/>
    </cofactor>
    <text evidence="1">Binds 1 zinc ion per subunit.</text>
</comment>
<comment type="subunit">
    <text evidence="1">Homodimer.</text>
</comment>
<comment type="subcellular location">
    <subcellularLocation>
        <location evidence="1">Cytoplasm</location>
    </subcellularLocation>
</comment>
<comment type="similarity">
    <text evidence="1">Belongs to the class-I aminoacyl-tRNA synthetase family. MetG type 1 subfamily.</text>
</comment>
<proteinExistence type="inferred from homology"/>
<protein>
    <recommendedName>
        <fullName evidence="1">Methionine--tRNA ligase</fullName>
        <ecNumber evidence="1">6.1.1.10</ecNumber>
    </recommendedName>
    <alternativeName>
        <fullName evidence="1">Methionyl-tRNA synthetase</fullName>
        <shortName evidence="1">MetRS</shortName>
    </alternativeName>
</protein>
<gene>
    <name evidence="1" type="primary">metG</name>
    <name type="ordered locus">Smlt3498</name>
</gene>
<sequence>MTRTALVTTALPYANGPLHLGHLVGYIQADIWVRARRMSGGKAWFVCADDTHGTPIMLAAEKAGVTPETFIANIQASHERDFAAFGVAFDHYDSTNSAANKALTEQFYLKLEAAGHISRRSVAQFYDPAKGMFLPDRYVKGICPNCGSPDQYGDNCEVCGATYAPTDLKEPRSVISGATPEMRDSEHFFFEVGHFDAFLREWLAGDVALPGVKAKLGEWLNAEGGLRAWDISRDAPYFGFQIPGQPGKYFYVWLDAPIGYLSSFQTLCGRIGEDFEAHLRAGTSTELHHFIGKDIVNFHGLFWPAVLHGTGHRAPTRLHVNGYLTVDGAKMSKSRGTFVMARTFLDAGLEPEALRYYYAAKSGGGVDDLDLNLGDFIARVNADLVGKFVNLASRCAGFISKRFDGQLAAQLPDAAQYQRFVDGLAPIREAYERNDPAAAIRLTMTLADEANRYIDDVKPWVIAKQEGADAQLQAVCSQGLNLFRVLVTALKPVLPATAAQAEAFLAAPVNDWTELAQPLLGHRITDYTPLFTRIDPKKIDAMIDASKDTLQPAAAAAPAAKPAAPAPAPAPAKDEAKSADAPAYIGIDDFAKLDLRIGKVLVCEFVEGSDKLLRFELDAGELGKRQIFSGIRASYGEPEKLVGRSVVFIANLAPRKMRFGLSEGMILSAGFDGGALALLDADSGAQPGMPVR</sequence>
<keyword id="KW-0030">Aminoacyl-tRNA synthetase</keyword>
<keyword id="KW-0067">ATP-binding</keyword>
<keyword id="KW-0963">Cytoplasm</keyword>
<keyword id="KW-0436">Ligase</keyword>
<keyword id="KW-0479">Metal-binding</keyword>
<keyword id="KW-0547">Nucleotide-binding</keyword>
<keyword id="KW-0648">Protein biosynthesis</keyword>
<keyword id="KW-1185">Reference proteome</keyword>
<keyword id="KW-0694">RNA-binding</keyword>
<keyword id="KW-0820">tRNA-binding</keyword>
<keyword id="KW-0862">Zinc</keyword>
<dbReference type="EC" id="6.1.1.10" evidence="1"/>
<dbReference type="EMBL" id="AM743169">
    <property type="protein sequence ID" value="CAQ46921.1"/>
    <property type="molecule type" value="Genomic_DNA"/>
</dbReference>
<dbReference type="RefSeq" id="WP_012480942.1">
    <property type="nucleotide sequence ID" value="NC_010943.1"/>
</dbReference>
<dbReference type="SMR" id="B2FPT0"/>
<dbReference type="EnsemblBacteria" id="CAQ46921">
    <property type="protein sequence ID" value="CAQ46921"/>
    <property type="gene ID" value="Smlt3498"/>
</dbReference>
<dbReference type="KEGG" id="sml:Smlt3498"/>
<dbReference type="PATRIC" id="fig|522373.3.peg.3282"/>
<dbReference type="eggNOG" id="COG0073">
    <property type="taxonomic scope" value="Bacteria"/>
</dbReference>
<dbReference type="eggNOG" id="COG0143">
    <property type="taxonomic scope" value="Bacteria"/>
</dbReference>
<dbReference type="HOGENOM" id="CLU_009710_7_0_6"/>
<dbReference type="Proteomes" id="UP000008840">
    <property type="component" value="Chromosome"/>
</dbReference>
<dbReference type="GO" id="GO:0005829">
    <property type="term" value="C:cytosol"/>
    <property type="evidence" value="ECO:0007669"/>
    <property type="project" value="TreeGrafter"/>
</dbReference>
<dbReference type="GO" id="GO:0005524">
    <property type="term" value="F:ATP binding"/>
    <property type="evidence" value="ECO:0007669"/>
    <property type="project" value="UniProtKB-UniRule"/>
</dbReference>
<dbReference type="GO" id="GO:0046872">
    <property type="term" value="F:metal ion binding"/>
    <property type="evidence" value="ECO:0007669"/>
    <property type="project" value="UniProtKB-KW"/>
</dbReference>
<dbReference type="GO" id="GO:0004825">
    <property type="term" value="F:methionine-tRNA ligase activity"/>
    <property type="evidence" value="ECO:0007669"/>
    <property type="project" value="UniProtKB-UniRule"/>
</dbReference>
<dbReference type="GO" id="GO:0000049">
    <property type="term" value="F:tRNA binding"/>
    <property type="evidence" value="ECO:0007669"/>
    <property type="project" value="UniProtKB-KW"/>
</dbReference>
<dbReference type="GO" id="GO:0006431">
    <property type="term" value="P:methionyl-tRNA aminoacylation"/>
    <property type="evidence" value="ECO:0007669"/>
    <property type="project" value="UniProtKB-UniRule"/>
</dbReference>
<dbReference type="CDD" id="cd07957">
    <property type="entry name" value="Anticodon_Ia_Met"/>
    <property type="match status" value="1"/>
</dbReference>
<dbReference type="CDD" id="cd00814">
    <property type="entry name" value="MetRS_core"/>
    <property type="match status" value="1"/>
</dbReference>
<dbReference type="CDD" id="cd02800">
    <property type="entry name" value="tRNA_bind_EcMetRS_like"/>
    <property type="match status" value="1"/>
</dbReference>
<dbReference type="FunFam" id="1.10.730.10:FF:000005">
    <property type="entry name" value="Methionine--tRNA ligase"/>
    <property type="match status" value="1"/>
</dbReference>
<dbReference type="FunFam" id="2.20.28.20:FF:000001">
    <property type="entry name" value="Methionine--tRNA ligase"/>
    <property type="match status" value="1"/>
</dbReference>
<dbReference type="FunFam" id="2.40.50.140:FF:000042">
    <property type="entry name" value="Methionine--tRNA ligase"/>
    <property type="match status" value="1"/>
</dbReference>
<dbReference type="Gene3D" id="3.40.50.620">
    <property type="entry name" value="HUPs"/>
    <property type="match status" value="1"/>
</dbReference>
<dbReference type="Gene3D" id="1.10.730.10">
    <property type="entry name" value="Isoleucyl-tRNA Synthetase, Domain 1"/>
    <property type="match status" value="1"/>
</dbReference>
<dbReference type="Gene3D" id="2.20.28.20">
    <property type="entry name" value="Methionyl-tRNA synthetase, Zn-domain"/>
    <property type="match status" value="1"/>
</dbReference>
<dbReference type="Gene3D" id="2.40.50.140">
    <property type="entry name" value="Nucleic acid-binding proteins"/>
    <property type="match status" value="1"/>
</dbReference>
<dbReference type="HAMAP" id="MF_00098">
    <property type="entry name" value="Met_tRNA_synth_type1"/>
    <property type="match status" value="1"/>
</dbReference>
<dbReference type="InterPro" id="IPR001412">
    <property type="entry name" value="aa-tRNA-synth_I_CS"/>
</dbReference>
<dbReference type="InterPro" id="IPR041872">
    <property type="entry name" value="Anticodon_Met"/>
</dbReference>
<dbReference type="InterPro" id="IPR004495">
    <property type="entry name" value="Met-tRNA-synth_bsu_C"/>
</dbReference>
<dbReference type="InterPro" id="IPR023458">
    <property type="entry name" value="Met-tRNA_ligase_1"/>
</dbReference>
<dbReference type="InterPro" id="IPR014758">
    <property type="entry name" value="Met-tRNA_synth"/>
</dbReference>
<dbReference type="InterPro" id="IPR015413">
    <property type="entry name" value="Methionyl/Leucyl_tRNA_Synth"/>
</dbReference>
<dbReference type="InterPro" id="IPR033911">
    <property type="entry name" value="MetRS_core"/>
</dbReference>
<dbReference type="InterPro" id="IPR029038">
    <property type="entry name" value="MetRS_Zn"/>
</dbReference>
<dbReference type="InterPro" id="IPR012340">
    <property type="entry name" value="NA-bd_OB-fold"/>
</dbReference>
<dbReference type="InterPro" id="IPR014729">
    <property type="entry name" value="Rossmann-like_a/b/a_fold"/>
</dbReference>
<dbReference type="InterPro" id="IPR002547">
    <property type="entry name" value="tRNA-bd_dom"/>
</dbReference>
<dbReference type="InterPro" id="IPR009080">
    <property type="entry name" value="tRNAsynth_Ia_anticodon-bd"/>
</dbReference>
<dbReference type="NCBIfam" id="TIGR00398">
    <property type="entry name" value="metG"/>
    <property type="match status" value="1"/>
</dbReference>
<dbReference type="NCBIfam" id="TIGR00399">
    <property type="entry name" value="metG_C_term"/>
    <property type="match status" value="1"/>
</dbReference>
<dbReference type="NCBIfam" id="NF001100">
    <property type="entry name" value="PRK00133.1"/>
    <property type="match status" value="1"/>
</dbReference>
<dbReference type="PANTHER" id="PTHR45765">
    <property type="entry name" value="METHIONINE--TRNA LIGASE"/>
    <property type="match status" value="1"/>
</dbReference>
<dbReference type="PANTHER" id="PTHR45765:SF1">
    <property type="entry name" value="METHIONINE--TRNA LIGASE, CYTOPLASMIC"/>
    <property type="match status" value="1"/>
</dbReference>
<dbReference type="Pfam" id="PF19303">
    <property type="entry name" value="Anticodon_3"/>
    <property type="match status" value="1"/>
</dbReference>
<dbReference type="Pfam" id="PF09334">
    <property type="entry name" value="tRNA-synt_1g"/>
    <property type="match status" value="1"/>
</dbReference>
<dbReference type="Pfam" id="PF01588">
    <property type="entry name" value="tRNA_bind"/>
    <property type="match status" value="1"/>
</dbReference>
<dbReference type="PRINTS" id="PR01041">
    <property type="entry name" value="TRNASYNTHMET"/>
</dbReference>
<dbReference type="SUPFAM" id="SSF47323">
    <property type="entry name" value="Anticodon-binding domain of a subclass of class I aminoacyl-tRNA synthetases"/>
    <property type="match status" value="1"/>
</dbReference>
<dbReference type="SUPFAM" id="SSF57770">
    <property type="entry name" value="Methionyl-tRNA synthetase (MetRS), Zn-domain"/>
    <property type="match status" value="1"/>
</dbReference>
<dbReference type="SUPFAM" id="SSF50249">
    <property type="entry name" value="Nucleic acid-binding proteins"/>
    <property type="match status" value="1"/>
</dbReference>
<dbReference type="SUPFAM" id="SSF52374">
    <property type="entry name" value="Nucleotidylyl transferase"/>
    <property type="match status" value="1"/>
</dbReference>
<dbReference type="PROSITE" id="PS00178">
    <property type="entry name" value="AA_TRNA_LIGASE_I"/>
    <property type="match status" value="1"/>
</dbReference>
<dbReference type="PROSITE" id="PS50886">
    <property type="entry name" value="TRBD"/>
    <property type="match status" value="1"/>
</dbReference>
<reference key="1">
    <citation type="journal article" date="2008" name="Genome Biol.">
        <title>The complete genome, comparative and functional analysis of Stenotrophomonas maltophilia reveals an organism heavily shielded by drug resistance determinants.</title>
        <authorList>
            <person name="Crossman L.C."/>
            <person name="Gould V.C."/>
            <person name="Dow J.M."/>
            <person name="Vernikos G.S."/>
            <person name="Okazaki A."/>
            <person name="Sebaihia M."/>
            <person name="Saunders D."/>
            <person name="Arrowsmith C."/>
            <person name="Carver T."/>
            <person name="Peters N."/>
            <person name="Adlem E."/>
            <person name="Kerhornou A."/>
            <person name="Lord A."/>
            <person name="Murphy L."/>
            <person name="Seeger K."/>
            <person name="Squares R."/>
            <person name="Rutter S."/>
            <person name="Quail M.A."/>
            <person name="Rajandream M.A."/>
            <person name="Harris D."/>
            <person name="Churcher C."/>
            <person name="Bentley S.D."/>
            <person name="Parkhill J."/>
            <person name="Thomson N.R."/>
            <person name="Avison M.B."/>
        </authorList>
    </citation>
    <scope>NUCLEOTIDE SEQUENCE [LARGE SCALE GENOMIC DNA]</scope>
    <source>
        <strain>K279a</strain>
    </source>
</reference>
<evidence type="ECO:0000255" key="1">
    <source>
        <dbReference type="HAMAP-Rule" id="MF_00098"/>
    </source>
</evidence>
<evidence type="ECO:0000256" key="2">
    <source>
        <dbReference type="SAM" id="MobiDB-lite"/>
    </source>
</evidence>
<accession>B2FPT0</accession>
<feature type="chain" id="PRO_1000093736" description="Methionine--tRNA ligase">
    <location>
        <begin position="1"/>
        <end position="692"/>
    </location>
</feature>
<feature type="domain" description="tRNA-binding" evidence="1">
    <location>
        <begin position="589"/>
        <end position="692"/>
    </location>
</feature>
<feature type="region of interest" description="Disordered" evidence="2">
    <location>
        <begin position="554"/>
        <end position="575"/>
    </location>
</feature>
<feature type="short sequence motif" description="'HIGH' region">
    <location>
        <begin position="12"/>
        <end position="22"/>
    </location>
</feature>
<feature type="short sequence motif" description="'KMSKS' region">
    <location>
        <begin position="330"/>
        <end position="334"/>
    </location>
</feature>
<feature type="compositionally biased region" description="Low complexity" evidence="2">
    <location>
        <begin position="554"/>
        <end position="563"/>
    </location>
</feature>
<feature type="binding site" evidence="1">
    <location>
        <position position="143"/>
    </location>
    <ligand>
        <name>Zn(2+)</name>
        <dbReference type="ChEBI" id="CHEBI:29105"/>
    </ligand>
</feature>
<feature type="binding site" evidence="1">
    <location>
        <position position="146"/>
    </location>
    <ligand>
        <name>Zn(2+)</name>
        <dbReference type="ChEBI" id="CHEBI:29105"/>
    </ligand>
</feature>
<feature type="binding site" evidence="1">
    <location>
        <position position="156"/>
    </location>
    <ligand>
        <name>Zn(2+)</name>
        <dbReference type="ChEBI" id="CHEBI:29105"/>
    </ligand>
</feature>
<feature type="binding site" evidence="1">
    <location>
        <position position="159"/>
    </location>
    <ligand>
        <name>Zn(2+)</name>
        <dbReference type="ChEBI" id="CHEBI:29105"/>
    </ligand>
</feature>
<feature type="binding site" evidence="1">
    <location>
        <position position="333"/>
    </location>
    <ligand>
        <name>ATP</name>
        <dbReference type="ChEBI" id="CHEBI:30616"/>
    </ligand>
</feature>